<organism>
    <name type="scientific">Bos taurus</name>
    <name type="common">Bovine</name>
    <dbReference type="NCBI Taxonomy" id="9913"/>
    <lineage>
        <taxon>Eukaryota</taxon>
        <taxon>Metazoa</taxon>
        <taxon>Chordata</taxon>
        <taxon>Craniata</taxon>
        <taxon>Vertebrata</taxon>
        <taxon>Euteleostomi</taxon>
        <taxon>Mammalia</taxon>
        <taxon>Eutheria</taxon>
        <taxon>Laurasiatheria</taxon>
        <taxon>Artiodactyla</taxon>
        <taxon>Ruminantia</taxon>
        <taxon>Pecora</taxon>
        <taxon>Bovidae</taxon>
        <taxon>Bovinae</taxon>
        <taxon>Bos</taxon>
    </lineage>
</organism>
<sequence length="365" mass="39221">MAAAAAMTAAGCGGAGAARSLSRFRGCLAGALLGDCVGAVYEARDTVDLTSVLRQVQDLEPDPGSPGSARTEALCYTDDTAMARALVQSLLAKEAFDEVDMAHRFAQEYKKDPDRGYGAGVITVFRKHLSPRCRDVFEPARAQFNGKGSYGNGGAMRVAGISLAYSSVQDVQKFARLSAQLTHASSLGYNGAILQALAVHLALQGESSSEHFLEQLLGHMEELESDAQSVLDARELGMEERPYSSRLKKIGELLEQDSVTREEVVSELGNGIAAFESVPTAIYCFLRCMEPDPEIPSTFNSLQRTLVYSISLGGDTDTIATMAGAIAGAYYGMEQVPESWQQSCEGYEETDVLAQSLHRVFQKSL</sequence>
<name>ADPRS_BOVIN</name>
<accession>Q3SYV9</accession>
<feature type="chain" id="PRO_0000277612" description="ADP-ribosylhydrolase ARH3">
    <location>
        <begin position="1"/>
        <end position="365"/>
    </location>
</feature>
<feature type="binding site" evidence="1">
    <location>
        <position position="42"/>
    </location>
    <ligand>
        <name>Mg(2+)</name>
        <dbReference type="ChEBI" id="CHEBI:18420"/>
        <label>2</label>
    </ligand>
</feature>
<feature type="binding site" evidence="1">
    <location>
        <position position="77"/>
    </location>
    <ligand>
        <name>Mg(2+)</name>
        <dbReference type="ChEBI" id="CHEBI:18420"/>
        <label>1</label>
    </ligand>
</feature>
<feature type="binding site" evidence="1">
    <location>
        <position position="78"/>
    </location>
    <ligand>
        <name>Mg(2+)</name>
        <dbReference type="ChEBI" id="CHEBI:18420"/>
        <label>1</label>
    </ligand>
</feature>
<feature type="binding site" evidence="1">
    <location>
        <position position="78"/>
    </location>
    <ligand>
        <name>substrate</name>
    </ligand>
</feature>
<feature type="binding site" evidence="1">
    <location>
        <position position="79"/>
    </location>
    <ligand>
        <name>Mg(2+)</name>
        <dbReference type="ChEBI" id="CHEBI:18420"/>
        <label>1</label>
    </ligand>
</feature>
<feature type="binding site" evidence="1">
    <location>
        <begin position="147"/>
        <end position="153"/>
    </location>
    <ligand>
        <name>substrate</name>
    </ligand>
</feature>
<feature type="binding site" evidence="1">
    <location>
        <position position="183"/>
    </location>
    <ligand>
        <name>substrate</name>
    </ligand>
</feature>
<feature type="binding site" evidence="1">
    <location>
        <position position="236"/>
    </location>
    <ligand>
        <name>substrate</name>
    </ligand>
</feature>
<feature type="binding site" evidence="1">
    <location>
        <position position="272"/>
    </location>
    <ligand>
        <name>substrate</name>
    </ligand>
</feature>
<feature type="binding site" evidence="1">
    <location>
        <position position="315"/>
    </location>
    <ligand>
        <name>Mg(2+)</name>
        <dbReference type="ChEBI" id="CHEBI:18420"/>
        <label>2</label>
    </ligand>
</feature>
<feature type="binding site" evidence="1">
    <location>
        <position position="317"/>
    </location>
    <ligand>
        <name>Mg(2+)</name>
        <dbReference type="ChEBI" id="CHEBI:18420"/>
        <label>1</label>
    </ligand>
</feature>
<feature type="binding site" evidence="1">
    <location>
        <position position="317"/>
    </location>
    <ligand>
        <name>Mg(2+)</name>
        <dbReference type="ChEBI" id="CHEBI:18420"/>
        <label>2</label>
    </ligand>
</feature>
<feature type="binding site" evidence="1">
    <location>
        <position position="318"/>
    </location>
    <ligand>
        <name>Mg(2+)</name>
        <dbReference type="ChEBI" id="CHEBI:18420"/>
        <label>2</label>
    </ligand>
</feature>
<feature type="site" description="Glutamate flap" evidence="1">
    <location>
        <position position="42"/>
    </location>
</feature>
<protein>
    <recommendedName>
        <fullName evidence="2">ADP-ribosylhydrolase ARH3</fullName>
    </recommendedName>
    <alternativeName>
        <fullName evidence="2">ADP-ribose glycohydrolase ARH3</fullName>
    </alternativeName>
    <alternativeName>
        <fullName evidence="1">ADP-ribosylhydrolase 3</fullName>
    </alternativeName>
    <alternativeName>
        <fullName evidence="2">O-acetyl-ADP-ribose deacetylase ARH3</fullName>
        <ecNumber evidence="1">3.5.1.-</ecNumber>
    </alternativeName>
    <alternativeName>
        <fullName evidence="2">Poly(ADP-ribose) glycohydrolase ARH3</fullName>
        <ecNumber evidence="1">3.2.1.143</ecNumber>
    </alternativeName>
    <alternativeName>
        <fullName evidence="2">[Protein ADP-ribosylarginine] hydrolase-like protein 2</fullName>
    </alternativeName>
    <alternativeName>
        <fullName>[Protein ADP-ribosylserine] hydrolase</fullName>
        <ecNumber>3.2.2.-</ecNumber>
    </alternativeName>
</protein>
<evidence type="ECO:0000250" key="1">
    <source>
        <dbReference type="UniProtKB" id="Q9NX46"/>
    </source>
</evidence>
<evidence type="ECO:0000305" key="2"/>
<reference key="1">
    <citation type="submission" date="2005-08" db="EMBL/GenBank/DDBJ databases">
        <authorList>
            <consortium name="NIH - Mammalian Gene Collection (MGC) project"/>
        </authorList>
    </citation>
    <scope>NUCLEOTIDE SEQUENCE [LARGE SCALE MRNA]</scope>
    <source>
        <strain>Crossbred X Angus</strain>
        <tissue>Ileum</tissue>
    </source>
</reference>
<proteinExistence type="evidence at transcript level"/>
<keyword id="KW-0158">Chromosome</keyword>
<keyword id="KW-0963">Cytoplasm</keyword>
<keyword id="KW-0227">DNA damage</keyword>
<keyword id="KW-0234">DNA repair</keyword>
<keyword id="KW-0378">Hydrolase</keyword>
<keyword id="KW-0460">Magnesium</keyword>
<keyword id="KW-0479">Metal-binding</keyword>
<keyword id="KW-0496">Mitochondrion</keyword>
<keyword id="KW-0539">Nucleus</keyword>
<keyword id="KW-1185">Reference proteome</keyword>
<gene>
    <name type="primary">ADPRS</name>
    <name evidence="1" type="synonym">ADPRHL2</name>
    <name evidence="1" type="synonym">ARH3</name>
</gene>
<comment type="function">
    <text evidence="1">ADP-ribosylhydrolase that preferentially hydrolyzes the scissile alpha-O-linkage attached to the anomeric C1'' position of ADP-ribose and acts on different substrates, such as proteins ADP-ribosylated on serine and threonine, free poly(ADP-ribose) and O-acetyl-ADP-D-ribose. Specifically acts as a serine mono-ADP-ribosylhydrolase by mediating the removal of mono-ADP-ribose attached to serine residues on proteins, thereby playing a key role in DNA damage response. Serine ADP-ribosylation of proteins constitutes the primary form of ADP-ribosylation of proteins in response to DNA damage. Does not hydrolyze ADP-ribosyl-arginine, -cysteine, -diphthamide, or -asparagine bonds. Also able to degrade protein free poly(ADP-ribose), which is synthesized in response to DNA damage: free poly(ADP-ribose) acts as a potent cell death signal and its degradation by ADPRHL2 protects cells from poly(ADP-ribose)-dependent cell death, a process named parthanatos (By similarity). Also hydrolyzes free poly(ADP-ribose) in mitochondria. Specifically digests O-acetyl-ADP-D-ribose, a product of deacetylation reactions catalyzed by sirtuins. Specifically degrades 1''-O-acetyl-ADP-D-ribose isomer, rather than 2''-O-acetyl-ADP-D-ribose or 3''-O-acetyl-ADP-D-ribose isomers.</text>
</comment>
<comment type="catalytic activity">
    <reaction evidence="1">
        <text>[(1''-&gt;2')-ADP-alpha-D-ribose](n) + H2O = [(1''-&gt;2')-ADP-alpha-D-ribose](n-1) + ADP-D-ribose</text>
        <dbReference type="Rhea" id="RHEA:52216"/>
        <dbReference type="Rhea" id="RHEA-COMP:16922"/>
        <dbReference type="Rhea" id="RHEA-COMP:16923"/>
        <dbReference type="ChEBI" id="CHEBI:15377"/>
        <dbReference type="ChEBI" id="CHEBI:57967"/>
        <dbReference type="ChEBI" id="CHEBI:142512"/>
        <dbReference type="EC" id="3.2.1.143"/>
    </reaction>
</comment>
<comment type="catalytic activity">
    <reaction evidence="1">
        <text>1''-O-acetyl-ADP-alpha-D-ribose + H2O = ADP-D-ribose + acetate + H(+)</text>
        <dbReference type="Rhea" id="RHEA:58112"/>
        <dbReference type="ChEBI" id="CHEBI:15377"/>
        <dbReference type="ChEBI" id="CHEBI:15378"/>
        <dbReference type="ChEBI" id="CHEBI:30089"/>
        <dbReference type="ChEBI" id="CHEBI:57967"/>
        <dbReference type="ChEBI" id="CHEBI:142511"/>
    </reaction>
</comment>
<comment type="catalytic activity">
    <reaction evidence="1">
        <text>O-(ADP-D-ribosyl)-L-seryl-[protein] + H2O = ADP-D-ribose + L-seryl-[protein]</text>
        <dbReference type="Rhea" id="RHEA:58256"/>
        <dbReference type="Rhea" id="RHEA-COMP:9863"/>
        <dbReference type="Rhea" id="RHEA-COMP:15091"/>
        <dbReference type="ChEBI" id="CHEBI:15377"/>
        <dbReference type="ChEBI" id="CHEBI:29999"/>
        <dbReference type="ChEBI" id="CHEBI:57967"/>
        <dbReference type="ChEBI" id="CHEBI:142556"/>
    </reaction>
</comment>
<comment type="catalytic activity">
    <reaction evidence="1">
        <text>alpha-NAD(+) + H2O = ADP-D-ribose + nicotinamide + H(+)</text>
        <dbReference type="Rhea" id="RHEA:68792"/>
        <dbReference type="ChEBI" id="CHEBI:15377"/>
        <dbReference type="ChEBI" id="CHEBI:15378"/>
        <dbReference type="ChEBI" id="CHEBI:17154"/>
        <dbReference type="ChEBI" id="CHEBI:57967"/>
        <dbReference type="ChEBI" id="CHEBI:77017"/>
    </reaction>
</comment>
<comment type="cofactor">
    <cofactor evidence="1">
        <name>Mg(2+)</name>
        <dbReference type="ChEBI" id="CHEBI:18420"/>
    </cofactor>
    <text evidence="1">Binds 2 magnesium ions per subunit.</text>
</comment>
<comment type="activity regulation">
    <text evidence="1">The protein undergoes a dramatic conformational switch from closed to open states upon substrate-binding, which enables specific substrate recognition for the 1''-O-linkage. The glutamate flap (Glu-42) blocks substrate entrance to Mg(2+) in the unliganded closed state. In presence of substrate, Glu-42 is ejected from the active site: this closed-to-open transition significantly widens the substrate-binding channel and precisely positions the scissile 1''-O-linkage for cleavage while securing tightly 2'- and 3'-hydroxyls of ADP-ribose.</text>
</comment>
<comment type="subunit">
    <text evidence="1">Monomer.</text>
</comment>
<comment type="subcellular location">
    <subcellularLocation>
        <location evidence="1">Nucleus</location>
    </subcellularLocation>
    <subcellularLocation>
        <location evidence="1">Cytoplasm</location>
    </subcellularLocation>
    <subcellularLocation>
        <location evidence="1">Chromosome</location>
    </subcellularLocation>
    <subcellularLocation>
        <location evidence="1">Mitochondrion matrix</location>
    </subcellularLocation>
    <text evidence="1">Recruited to DNA lesion regions following DNA damage; ADP-D-ribose-recognition is required for recruitment to DNA damage sites.</text>
</comment>
<comment type="similarity">
    <text evidence="2">Belongs to the ADP-ribosylglycohydrolase family.</text>
</comment>
<dbReference type="EC" id="3.5.1.-" evidence="1"/>
<dbReference type="EC" id="3.2.1.143" evidence="1"/>
<dbReference type="EC" id="3.2.2.-"/>
<dbReference type="EMBL" id="BC103360">
    <property type="protein sequence ID" value="AAI03361.1"/>
    <property type="molecule type" value="mRNA"/>
</dbReference>
<dbReference type="RefSeq" id="NP_001030417.1">
    <property type="nucleotide sequence ID" value="NM_001035340.2"/>
</dbReference>
<dbReference type="SMR" id="Q3SYV9"/>
<dbReference type="FunCoup" id="Q3SYV9">
    <property type="interactions" value="2513"/>
</dbReference>
<dbReference type="STRING" id="9913.ENSBTAP00000028950"/>
<dbReference type="PaxDb" id="9913-ENSBTAP00000028950"/>
<dbReference type="GeneID" id="521650"/>
<dbReference type="KEGG" id="bta:521650"/>
<dbReference type="CTD" id="54936"/>
<dbReference type="eggNOG" id="ENOG502QUER">
    <property type="taxonomic scope" value="Eukaryota"/>
</dbReference>
<dbReference type="InParanoid" id="Q3SYV9"/>
<dbReference type="OrthoDB" id="410104at2759"/>
<dbReference type="Proteomes" id="UP000009136">
    <property type="component" value="Unplaced"/>
</dbReference>
<dbReference type="GO" id="GO:0005759">
    <property type="term" value="C:mitochondrial matrix"/>
    <property type="evidence" value="ECO:0007669"/>
    <property type="project" value="UniProtKB-SubCell"/>
</dbReference>
<dbReference type="GO" id="GO:0005739">
    <property type="term" value="C:mitochondrion"/>
    <property type="evidence" value="ECO:0000318"/>
    <property type="project" value="GO_Central"/>
</dbReference>
<dbReference type="GO" id="GO:0005634">
    <property type="term" value="C:nucleus"/>
    <property type="evidence" value="ECO:0000250"/>
    <property type="project" value="UniProtKB"/>
</dbReference>
<dbReference type="GO" id="GO:0090734">
    <property type="term" value="C:site of DNA damage"/>
    <property type="evidence" value="ECO:0000250"/>
    <property type="project" value="UniProtKB"/>
</dbReference>
<dbReference type="GO" id="GO:0140292">
    <property type="term" value="F:ADP-ribosylserine hydrolase activity"/>
    <property type="evidence" value="ECO:0000250"/>
    <property type="project" value="UniProtKB"/>
</dbReference>
<dbReference type="GO" id="GO:0004553">
    <property type="term" value="F:hydrolase activity, hydrolyzing O-glycosyl compounds"/>
    <property type="evidence" value="ECO:0000250"/>
    <property type="project" value="UniProtKB"/>
</dbReference>
<dbReference type="GO" id="GO:0000287">
    <property type="term" value="F:magnesium ion binding"/>
    <property type="evidence" value="ECO:0000250"/>
    <property type="project" value="UniProtKB"/>
</dbReference>
<dbReference type="GO" id="GO:0061463">
    <property type="term" value="F:O-acetyl-ADP-ribose deacetylase activity"/>
    <property type="evidence" value="ECO:0000250"/>
    <property type="project" value="UniProtKB"/>
</dbReference>
<dbReference type="GO" id="GO:0004649">
    <property type="term" value="F:poly(ADP-ribose) glycohydrolase activity"/>
    <property type="evidence" value="ECO:0000250"/>
    <property type="project" value="UniProtKB"/>
</dbReference>
<dbReference type="GO" id="GO:0006281">
    <property type="term" value="P:DNA repair"/>
    <property type="evidence" value="ECO:0000250"/>
    <property type="project" value="UniProtKB"/>
</dbReference>
<dbReference type="GO" id="GO:0060546">
    <property type="term" value="P:negative regulation of necroptotic process"/>
    <property type="evidence" value="ECO:0000250"/>
    <property type="project" value="UniProtKB"/>
</dbReference>
<dbReference type="GO" id="GO:0140290">
    <property type="term" value="P:peptidyl-serine ADP-deribosylation"/>
    <property type="evidence" value="ECO:0000250"/>
    <property type="project" value="UniProtKB"/>
</dbReference>
<dbReference type="FunFam" id="1.10.4080.10:FF:000001">
    <property type="entry name" value="ADP-ribose glycohydrolase ARH3"/>
    <property type="match status" value="1"/>
</dbReference>
<dbReference type="Gene3D" id="1.10.4080.10">
    <property type="entry name" value="ADP-ribosylation/Crystallin J1"/>
    <property type="match status" value="1"/>
</dbReference>
<dbReference type="InterPro" id="IPR050792">
    <property type="entry name" value="ADP-ribosylglycohydrolase"/>
</dbReference>
<dbReference type="InterPro" id="IPR005502">
    <property type="entry name" value="Ribosyl_crysJ1"/>
</dbReference>
<dbReference type="InterPro" id="IPR036705">
    <property type="entry name" value="Ribosyl_crysJ1_sf"/>
</dbReference>
<dbReference type="PANTHER" id="PTHR16222">
    <property type="entry name" value="ADP-RIBOSYLGLYCOHYDROLASE"/>
    <property type="match status" value="1"/>
</dbReference>
<dbReference type="PANTHER" id="PTHR16222:SF24">
    <property type="entry name" value="ADP-RIBOSYLHYDROLASE ARH3"/>
    <property type="match status" value="1"/>
</dbReference>
<dbReference type="Pfam" id="PF03747">
    <property type="entry name" value="ADP_ribosyl_GH"/>
    <property type="match status" value="1"/>
</dbReference>
<dbReference type="SUPFAM" id="SSF101478">
    <property type="entry name" value="ADP-ribosylglycohydrolase"/>
    <property type="match status" value="1"/>
</dbReference>